<reference key="1">
    <citation type="journal article" date="2018" name="Angew. Chem. Int. Ed.">
        <title>Genome mining and comparative biosynthesis of meroterpenoids from two phylogenetically distinct fungi.</title>
        <authorList>
            <person name="Zhang X."/>
            <person name="Wang T.T."/>
            <person name="Xu Q.L."/>
            <person name="Xiong Y."/>
            <person name="Zhang L."/>
            <person name="Han H."/>
            <person name="Xu K."/>
            <person name="Guo W.J."/>
            <person name="Xu Q."/>
            <person name="Tan R.X."/>
            <person name="Ge H.M."/>
        </authorList>
    </citation>
    <scope>NUCLEOTIDE SEQUENCE [MRNA]</scope>
    <scope>DISRUPTION PHENOTYPE</scope>
    <scope>FUNCTION</scope>
    <scope>PATHWAY</scope>
    <source>
        <strain>NF2194</strain>
    </source>
</reference>
<comment type="function">
    <text evidence="4 7">Terpene cyclase/mutase; part of the gene cluster that mediates the biosynthesis of the meroterpenoids arthripenoids (PubMed:29797385). The pathway begins with the HR-PKS atnH that catalyzes two chain-extension steps to form a reduced triketide, which then primes the SAT domain in the NR-PKS atnG to initiate three more cycles of extension to give a linear hexaketide corresponding to the polyketide part of arthripenoids (PubMed:29797385). The FAD-dependent monooxygenase atnJ then performs an oxidative decarboxylation at C11 of the atnH/atnG product, via an electrophilic aromatic hydroxylation with concomitant ipso-decarboxylation (PubMed:29797385). The membrane-bound polyprenyl transferase atnF then introduces a farnesyl group before the FAD-dependent monooxygenase atnK functions as the first epoxidase on terminal C12'-C13' olefin, followed by a second epoxidation on C7'-C8' catalyzed by atnA (PubMed:29797385). The terpene cyclase/mutase atnI then initiates the sequential tricyclic ring formation through protonation of the terminal epoxide and catalyzes the regioselective and stereoselective 6/6/6-tricyclic ring formation (PubMed:29797385). The cytochrome P450 monooxygenase atnM is responsible for hydroxylating both C1' and C10' (Probable). The next steps may involve ketoreduction and acetyl transfer by the ketoreductase atnB and the acetyltransferase atnC, and lead to the production of arthripenoid B, the final biosynthetic product of the atn cluster (PubMed:29797385). The hydroquinone moiety in arthripenoid B is prone to undergo spontaneous oxidation to afford a benzoquinone compound, a key intermediate for generating structure diversity (Probable). For instance, addition of a cysteine followed by ring contraction gives arthripenoid A, tautomerization gives the main product arthripenoid C, addition of a molecular of water or amine affords arthripenoid D or E, respectively, and loss of one water forms arthripenoid F (Probable).</text>
</comment>
<comment type="pathway">
    <text evidence="4">Secondary metabolite biosynthesis; terpenoid biosynthesis.</text>
</comment>
<comment type="disruption phenotype">
    <text evidence="4">Abolishes the production of arthripenoids but leads to the accumulation of a new compound that possesses a sesquiterpenoid chain with adiol group at C12' and C13' position.</text>
</comment>
<comment type="similarity">
    <text evidence="6">Belongs to the terpene cyclase/mutase family.</text>
</comment>
<keyword id="KW-0413">Isomerase</keyword>
<keyword id="KW-0677">Repeat</keyword>
<dbReference type="EC" id="5.4.99.-" evidence="7"/>
<dbReference type="EMBL" id="MH183015">
    <property type="protein sequence ID" value="AYO60882.1"/>
    <property type="molecule type" value="mRNA"/>
</dbReference>
<dbReference type="SMR" id="A0A455LN86"/>
<dbReference type="UniPathway" id="UPA00213"/>
<dbReference type="GO" id="GO:0005811">
    <property type="term" value="C:lipid droplet"/>
    <property type="evidence" value="ECO:0007669"/>
    <property type="project" value="InterPro"/>
</dbReference>
<dbReference type="GO" id="GO:0000250">
    <property type="term" value="F:lanosterol synthase activity"/>
    <property type="evidence" value="ECO:0007669"/>
    <property type="project" value="TreeGrafter"/>
</dbReference>
<dbReference type="GO" id="GO:0006696">
    <property type="term" value="P:ergosterol biosynthetic process"/>
    <property type="evidence" value="ECO:0007669"/>
    <property type="project" value="TreeGrafter"/>
</dbReference>
<dbReference type="GO" id="GO:0016104">
    <property type="term" value="P:triterpenoid biosynthetic process"/>
    <property type="evidence" value="ECO:0007669"/>
    <property type="project" value="InterPro"/>
</dbReference>
<dbReference type="CDD" id="cd02892">
    <property type="entry name" value="SQCY_1"/>
    <property type="match status" value="1"/>
</dbReference>
<dbReference type="Gene3D" id="1.50.10.20">
    <property type="match status" value="2"/>
</dbReference>
<dbReference type="Gene3D" id="6.20.120.20">
    <property type="match status" value="1"/>
</dbReference>
<dbReference type="InterPro" id="IPR032696">
    <property type="entry name" value="SQ_cyclase_C"/>
</dbReference>
<dbReference type="InterPro" id="IPR032697">
    <property type="entry name" value="SQ_cyclase_N"/>
</dbReference>
<dbReference type="InterPro" id="IPR018333">
    <property type="entry name" value="Squalene_cyclase"/>
</dbReference>
<dbReference type="InterPro" id="IPR008930">
    <property type="entry name" value="Terpenoid_cyclase/PrenylTrfase"/>
</dbReference>
<dbReference type="NCBIfam" id="TIGR01787">
    <property type="entry name" value="squalene_cyclas"/>
    <property type="match status" value="1"/>
</dbReference>
<dbReference type="PANTHER" id="PTHR11764">
    <property type="entry name" value="TERPENE CYCLASE/MUTASE FAMILY MEMBER"/>
    <property type="match status" value="1"/>
</dbReference>
<dbReference type="PANTHER" id="PTHR11764:SF76">
    <property type="entry name" value="TERPENE CYCLASE_MUTASE FAMILY MEMBER"/>
    <property type="match status" value="1"/>
</dbReference>
<dbReference type="Pfam" id="PF13243">
    <property type="entry name" value="SQHop_cyclase_C"/>
    <property type="match status" value="1"/>
</dbReference>
<dbReference type="Pfam" id="PF13249">
    <property type="entry name" value="SQHop_cyclase_N"/>
    <property type="match status" value="1"/>
</dbReference>
<dbReference type="SUPFAM" id="SSF48239">
    <property type="entry name" value="Terpenoid cyclases/Protein prenyltransferases"/>
    <property type="match status" value="2"/>
</dbReference>
<sequence length="707" mass="79228">MGQHIASSESSTNGHVSLETNGDEKTDYSRWRLIDDQGRQSWRYLESDKERVDWPQTTYEKHFLGLDTELPDLTKAQTPLQAAQGAMSYFSQLQLPSGQWASECIGPLFILAFVVIAGYVTDTPLPAGYAVEIRRYLFARQCVADGGWGWHAEASESSAIGTVLSYVVLRLLGTTRDDPRLVRARTLLHEFGGATHAPGLAKFWLCILGVMKWECVNPFLPEFWLSPDSDPASPSKWYLHTRTNFTSMSYVWSKQWSYAGDAITEQLKAELYTQPYDTIDFAGHRSSLAAVDNNYPKWWLVNLMNWLTVAVYIPYFRKPATAESAERKVWDLIVTEDKNTEYIGLSPISKAANLVACYIHDGPDGSSVRAHRRTMGQYFWMTQDGMACNLSDGIQVWDTSLAVQALCAAGASSNPRFQSTLVKAHAFLADHQLLEDVQDQEKCHRWPRKGGWPFSTRYQGYMISECTGEGLRSAMQLQGISHLGLTQRIPEERLRDAVECLLNLQNDTGGFGVYEKRLGSPKLAWLEMGEFVGKTMVTYDYVECTTAAVSALLSFSKLHPNYRAAEIEATTAQGLGFIKQSQKPDGGWYGAWGVCFTYAGMFALETLALAGETYATSEASRRGCDFLLDKQKDDGGWGESYLSLQREEYVQHEESQVVQTAWVCMALMHAGYPGREPIKRGLRLIMSRQQSKGQWYQEALEGGVGDG</sequence>
<evidence type="ECO:0000250" key="1">
    <source>
        <dbReference type="UniProtKB" id="P48449"/>
    </source>
</evidence>
<evidence type="ECO:0000255" key="2"/>
<evidence type="ECO:0000256" key="3">
    <source>
        <dbReference type="SAM" id="MobiDB-lite"/>
    </source>
</evidence>
<evidence type="ECO:0000269" key="4">
    <source>
    </source>
</evidence>
<evidence type="ECO:0000303" key="5">
    <source>
    </source>
</evidence>
<evidence type="ECO:0000305" key="6"/>
<evidence type="ECO:0000305" key="7">
    <source>
    </source>
</evidence>
<accession>A0A455LN86</accession>
<feature type="chain" id="PRO_0000452568" description="Terpene cyclase/mutase atnI">
    <location>
        <begin position="1"/>
        <end position="707"/>
    </location>
</feature>
<feature type="repeat" description="PFTB 1" evidence="2">
    <location>
        <begin position="130"/>
        <end position="173"/>
    </location>
</feature>
<feature type="repeat" description="PFTB 2" evidence="2">
    <location>
        <begin position="494"/>
        <end position="535"/>
    </location>
</feature>
<feature type="repeat" description="PFTB 3" evidence="2">
    <location>
        <begin position="571"/>
        <end position="608"/>
    </location>
</feature>
<feature type="repeat" description="PFTB 4" evidence="2">
    <location>
        <begin position="620"/>
        <end position="661"/>
    </location>
</feature>
<feature type="region of interest" description="Disordered" evidence="3">
    <location>
        <begin position="1"/>
        <end position="22"/>
    </location>
</feature>
<feature type="compositionally biased region" description="Polar residues" evidence="3">
    <location>
        <begin position="1"/>
        <end position="20"/>
    </location>
</feature>
<feature type="site" description="Transition state stabilizer" evidence="1">
    <location>
        <position position="397"/>
    </location>
</feature>
<feature type="site" description="Transition state stabilizer" evidence="1">
    <location>
        <position position="454"/>
    </location>
</feature>
<feature type="site" description="Transition state stabilizer" evidence="1">
    <location>
        <position position="592"/>
    </location>
</feature>
<organism>
    <name type="scientific">Arthrinium sp</name>
    <dbReference type="NCBI Taxonomy" id="1756131"/>
    <lineage>
        <taxon>Eukaryota</taxon>
        <taxon>Fungi</taxon>
        <taxon>Dikarya</taxon>
        <taxon>Ascomycota</taxon>
        <taxon>Pezizomycotina</taxon>
        <taxon>Sordariomycetes</taxon>
        <taxon>Xylariomycetidae</taxon>
        <taxon>Amphisphaeriales</taxon>
        <taxon>Apiosporaceae</taxon>
        <taxon>Arthrinium</taxon>
    </lineage>
</organism>
<protein>
    <recommendedName>
        <fullName evidence="5">Terpene cyclase/mutase atnI</fullName>
        <ecNumber evidence="7">5.4.99.-</ecNumber>
    </recommendedName>
    <alternativeName>
        <fullName evidence="5">Arthripenoid biosynthesis cluster protein I</fullName>
    </alternativeName>
</protein>
<proteinExistence type="evidence at transcript level"/>
<gene>
    <name evidence="5" type="primary">atnI</name>
</gene>
<name>ATNI_ARTSZ</name>